<feature type="chain" id="PRO_0000231026" description="Cytospin-A">
    <location>
        <begin position="1"/>
        <end position="1101"/>
    </location>
</feature>
<feature type="domain" description="Calponin-homology (CH)" evidence="3">
    <location>
        <begin position="995"/>
        <end position="1100"/>
    </location>
</feature>
<feature type="region of interest" description="Disordered" evidence="4">
    <location>
        <begin position="1"/>
        <end position="170"/>
    </location>
</feature>
<feature type="region of interest" description="Disordered" evidence="4">
    <location>
        <begin position="280"/>
        <end position="366"/>
    </location>
</feature>
<feature type="region of interest" description="Disordered" evidence="4">
    <location>
        <begin position="923"/>
        <end position="978"/>
    </location>
</feature>
<feature type="coiled-coil region" evidence="2">
    <location>
        <begin position="162"/>
        <end position="254"/>
    </location>
</feature>
<feature type="coiled-coil region" evidence="2">
    <location>
        <begin position="373"/>
        <end position="427"/>
    </location>
</feature>
<feature type="coiled-coil region" evidence="2">
    <location>
        <begin position="492"/>
        <end position="785"/>
    </location>
</feature>
<feature type="compositionally biased region" description="Polar residues" evidence="4">
    <location>
        <begin position="29"/>
        <end position="48"/>
    </location>
</feature>
<feature type="compositionally biased region" description="Polar residues" evidence="4">
    <location>
        <begin position="64"/>
        <end position="86"/>
    </location>
</feature>
<feature type="compositionally biased region" description="Low complexity" evidence="4">
    <location>
        <begin position="93"/>
        <end position="110"/>
    </location>
</feature>
<feature type="compositionally biased region" description="Basic and acidic residues" evidence="4">
    <location>
        <begin position="114"/>
        <end position="125"/>
    </location>
</feature>
<feature type="compositionally biased region" description="Basic and acidic residues" evidence="4">
    <location>
        <begin position="151"/>
        <end position="165"/>
    </location>
</feature>
<feature type="compositionally biased region" description="Low complexity" evidence="4">
    <location>
        <begin position="333"/>
        <end position="355"/>
    </location>
</feature>
<feature type="compositionally biased region" description="Basic and acidic residues" evidence="4">
    <location>
        <begin position="929"/>
        <end position="939"/>
    </location>
</feature>
<feature type="compositionally biased region" description="Low complexity" evidence="4">
    <location>
        <begin position="953"/>
        <end position="975"/>
    </location>
</feature>
<sequence>MRKASRSVGAAPKVPANNKSQATERSKSESSAPTASKVSRPGSSLSKAKSNDDLLAGMAGGLPASNSVKVKKNSTTSYPNSGTAMSGQEGRTRSSAGSSSNTKRSGSSGAKEVGSSRERLRERSRLTANKKPQGLGVGTGEVSAPSKRSRGRTDSDMIRMSKSKSDNQISDRAALEAKVKELMNLAKNKDAEILLLRTELRDTRSQLGQDVSDKSPDDLPLIHLQEQNTTVCEELQQLKSENRMLKDRLNALGFSLGQQPDDPDKLYGFQSLGINPGSHSDCGGGTLTSSVEGSAPGSMEDLLSQDESTLTGERRSSSMDNLDSECSEVYQPLTSSDDALDAPSSSSESEGLPSTERSRKGSSGNASEVSVACLTERIHQMEENQHSTAEELQATLQELADLQQITQELNSENERLGEEKVILMDSLCQQSDKLELFSRQLEYAQALLDEHHIAYSLDEDLKSSRYLDLEQRYMDLAENGRFEREQLLGVQQHLSNSLKMAEQDNKDAQDVIRALKERNHHMERIAEAEQLSKQALAATLEEYKATLNSEQGECARLKALLEQEKQRVAELYSIHSSGDASHIQNLLESVRSDKEKAESLASSLQEELLHARTDVNRMQDAFGKLEDEYRAFREEAQKQVSELTLALEKVRHELEEKETELSDMKETIFELEDEVEQHRAVKLHDNLIISDVENAVKKLQDQKHDMEREIKILNRKLREESAEWRQFQADLQTAVVIANDIKSEAQEEIGELKRQLQEALEKNEKLAKEMENATSRKQEEERGRVYNYMNAVERDLAALRQGMGLNRRSSTSSDPAPTVKTLIKSFDNASSQAAAVAAAAATPISRTPLSPSPMKTPPAAAVSPMQRHSISGPISVAKSLPGLSEKRPSYAEIPVQEHMLRSSSSSRSAASLPRVPAIDNAKSISVSRRSSEELKRDISVPDGSSAPSLMVMTSPSPQLSLSSSSPTASVTPTARSRIREERKDPLAALAREYGGSKRNALLKWCQKKTEGYPNIDITNFSSSWNDGLAFCALLHTYLPAHIPYQELTNQDKRRNFTLAFQAAESVGIKSTLDINEMVRTERPDWQCLMTYVTSIYKYFET</sequence>
<evidence type="ECO:0000250" key="1"/>
<evidence type="ECO:0000255" key="2"/>
<evidence type="ECO:0000255" key="3">
    <source>
        <dbReference type="PROSITE-ProRule" id="PRU00044"/>
    </source>
</evidence>
<evidence type="ECO:0000256" key="4">
    <source>
        <dbReference type="SAM" id="MobiDB-lite"/>
    </source>
</evidence>
<evidence type="ECO:0000305" key="5"/>
<dbReference type="EMBL" id="AY884299">
    <property type="protein sequence ID" value="AAX84190.1"/>
    <property type="molecule type" value="mRNA"/>
</dbReference>
<dbReference type="RefSeq" id="NP_001037875.1">
    <property type="nucleotide sequence ID" value="NM_001044410.1"/>
</dbReference>
<dbReference type="SMR" id="Q2KN96"/>
<dbReference type="FunCoup" id="Q2KN96">
    <property type="interactions" value="1483"/>
</dbReference>
<dbReference type="STRING" id="8364.ENSXETP00000032135"/>
<dbReference type="PaxDb" id="8364-ENSXETP00000009170"/>
<dbReference type="GeneID" id="733457"/>
<dbReference type="KEGG" id="xtr:733457"/>
<dbReference type="AGR" id="Xenbase:XB-GENE-5937736"/>
<dbReference type="CTD" id="23384"/>
<dbReference type="Xenbase" id="XB-GENE-5937736">
    <property type="gene designation" value="specc1l"/>
</dbReference>
<dbReference type="eggNOG" id="KOG4678">
    <property type="taxonomic scope" value="Eukaryota"/>
</dbReference>
<dbReference type="HOGENOM" id="CLU_009328_1_0_1"/>
<dbReference type="InParanoid" id="Q2KN96"/>
<dbReference type="OrthoDB" id="21607at2759"/>
<dbReference type="Proteomes" id="UP000008143">
    <property type="component" value="Chromosome 1"/>
</dbReference>
<dbReference type="GO" id="GO:0005737">
    <property type="term" value="C:cytoplasm"/>
    <property type="evidence" value="ECO:0007669"/>
    <property type="project" value="UniProtKB-KW"/>
</dbReference>
<dbReference type="GO" id="GO:0005921">
    <property type="term" value="C:gap junction"/>
    <property type="evidence" value="ECO:0007669"/>
    <property type="project" value="UniProtKB-SubCell"/>
</dbReference>
<dbReference type="GO" id="GO:0005819">
    <property type="term" value="C:spindle"/>
    <property type="evidence" value="ECO:0007669"/>
    <property type="project" value="UniProtKB-SubCell"/>
</dbReference>
<dbReference type="GO" id="GO:0051301">
    <property type="term" value="P:cell division"/>
    <property type="evidence" value="ECO:0007669"/>
    <property type="project" value="UniProtKB-KW"/>
</dbReference>
<dbReference type="CDD" id="cd21256">
    <property type="entry name" value="CH_CYTSA"/>
    <property type="match status" value="1"/>
</dbReference>
<dbReference type="FunFam" id="1.10.418.10:FF:000020">
    <property type="entry name" value="Cytospin-A isoform 1"/>
    <property type="match status" value="1"/>
</dbReference>
<dbReference type="Gene3D" id="1.10.418.10">
    <property type="entry name" value="Calponin-like domain"/>
    <property type="match status" value="1"/>
</dbReference>
<dbReference type="InterPro" id="IPR001715">
    <property type="entry name" value="CH_dom"/>
</dbReference>
<dbReference type="InterPro" id="IPR036872">
    <property type="entry name" value="CH_dom_sf"/>
</dbReference>
<dbReference type="InterPro" id="IPR050540">
    <property type="entry name" value="F-actin_Monoox_Mical"/>
</dbReference>
<dbReference type="PANTHER" id="PTHR23167">
    <property type="entry name" value="CALPONIN HOMOLOGY DOMAIN-CONTAINING PROTEIN DDB_G0272472-RELATED"/>
    <property type="match status" value="1"/>
</dbReference>
<dbReference type="PANTHER" id="PTHR23167:SF18">
    <property type="entry name" value="CYTOSPIN-A"/>
    <property type="match status" value="1"/>
</dbReference>
<dbReference type="Pfam" id="PF00307">
    <property type="entry name" value="CH"/>
    <property type="match status" value="1"/>
</dbReference>
<dbReference type="SMART" id="SM00033">
    <property type="entry name" value="CH"/>
    <property type="match status" value="1"/>
</dbReference>
<dbReference type="SUPFAM" id="SSF47576">
    <property type="entry name" value="Calponin-homology domain, CH-domain"/>
    <property type="match status" value="1"/>
</dbReference>
<dbReference type="PROSITE" id="PS50021">
    <property type="entry name" value="CH"/>
    <property type="match status" value="1"/>
</dbReference>
<protein>
    <recommendedName>
        <fullName>Cytospin-A</fullName>
    </recommendedName>
    <alternativeName>
        <fullName>SPECC1-like protein</fullName>
    </alternativeName>
    <alternativeName>
        <fullName>Sperm antigen with calponin homology and coiled-coil domains 1-like</fullName>
    </alternativeName>
</protein>
<comment type="function">
    <text evidence="1">Involved in cytokinesis and spindle organization. May play a role in actin cytoskeleton organization and microtubule stabilization and hence required for proper cell adhesion and migration (By similarity).</text>
</comment>
<comment type="subunit">
    <text evidence="1">May interact with both microtubules and actin cytoskeleton.</text>
</comment>
<comment type="subcellular location">
    <subcellularLocation>
        <location evidence="1">Cytoplasm</location>
        <location evidence="1">Cytoskeleton</location>
    </subcellularLocation>
    <subcellularLocation>
        <location evidence="1">Cytoplasm</location>
        <location evidence="1">Cytoskeleton</location>
        <location evidence="1">Spindle</location>
    </subcellularLocation>
    <subcellularLocation>
        <location evidence="1">Cell junction</location>
        <location evidence="1">Gap junction</location>
    </subcellularLocation>
    <text evidence="1">Colocalizes with beta-tubulin, acetylated alpha-tubulin and F-actin. Also observed in a ring around gamma-tubulin containing centrioles possibly in the microtubule organizing center (By similarity).</text>
</comment>
<comment type="similarity">
    <text evidence="5">Belongs to the cytospin-A family.</text>
</comment>
<keyword id="KW-0131">Cell cycle</keyword>
<keyword id="KW-0132">Cell division</keyword>
<keyword id="KW-0965">Cell junction</keyword>
<keyword id="KW-0175">Coiled coil</keyword>
<keyword id="KW-0963">Cytoplasm</keyword>
<keyword id="KW-0206">Cytoskeleton</keyword>
<keyword id="KW-0303">Gap junction</keyword>
<keyword id="KW-1185">Reference proteome</keyword>
<organism>
    <name type="scientific">Xenopus tropicalis</name>
    <name type="common">Western clawed frog</name>
    <name type="synonym">Silurana tropicalis</name>
    <dbReference type="NCBI Taxonomy" id="8364"/>
    <lineage>
        <taxon>Eukaryota</taxon>
        <taxon>Metazoa</taxon>
        <taxon>Chordata</taxon>
        <taxon>Craniata</taxon>
        <taxon>Vertebrata</taxon>
        <taxon>Euteleostomi</taxon>
        <taxon>Amphibia</taxon>
        <taxon>Batrachia</taxon>
        <taxon>Anura</taxon>
        <taxon>Pipoidea</taxon>
        <taxon>Pipidae</taxon>
        <taxon>Xenopodinae</taxon>
        <taxon>Xenopus</taxon>
        <taxon>Silurana</taxon>
    </lineage>
</organism>
<name>CYTSA_XENTR</name>
<gene>
    <name type="primary">specc1l</name>
    <name type="synonym">cytsa</name>
</gene>
<reference key="1">
    <citation type="submission" date="2005-01" db="EMBL/GenBank/DDBJ databases">
        <title>Characterization of cytospin A as a multiple coiled coil protein involved in cytokinesis and spindle organization.</title>
        <authorList>
            <person name="Huang C.-H."/>
            <person name="Ye T."/>
            <person name="Chen Y."/>
        </authorList>
    </citation>
    <scope>NUCLEOTIDE SEQUENCE [MRNA]</scope>
</reference>
<accession>Q2KN96</accession>
<proteinExistence type="evidence at transcript level"/>